<feature type="chain" id="PRO_0000092534" description="Molybdenum import ATP-binding protein ModC 2">
    <location>
        <begin position="1"/>
        <end position="897"/>
    </location>
</feature>
<feature type="domain" description="ABC transporter" evidence="1">
    <location>
        <begin position="6"/>
        <end position="236"/>
    </location>
</feature>
<feature type="domain" description="Mop" evidence="2">
    <location>
        <begin position="295"/>
        <end position="365"/>
    </location>
</feature>
<feature type="region of interest" description="Disordered" evidence="3">
    <location>
        <begin position="823"/>
        <end position="848"/>
    </location>
</feature>
<feature type="compositionally biased region" description="Basic and acidic residues" evidence="3">
    <location>
        <begin position="832"/>
        <end position="848"/>
    </location>
</feature>
<feature type="binding site" evidence="1">
    <location>
        <begin position="38"/>
        <end position="45"/>
    </location>
    <ligand>
        <name>ATP</name>
        <dbReference type="ChEBI" id="CHEBI:30616"/>
    </ligand>
</feature>
<comment type="function">
    <text evidence="1">Part of the ABC transporter complex ModABC involved in molybdenum import. Responsible for energy coupling to the transport system.</text>
</comment>
<comment type="catalytic activity">
    <reaction evidence="1">
        <text>molybdate(out) + ATP + H2O = molybdate(in) + ADP + phosphate + H(+)</text>
        <dbReference type="Rhea" id="RHEA:22020"/>
        <dbReference type="ChEBI" id="CHEBI:15377"/>
        <dbReference type="ChEBI" id="CHEBI:15378"/>
        <dbReference type="ChEBI" id="CHEBI:30616"/>
        <dbReference type="ChEBI" id="CHEBI:36264"/>
        <dbReference type="ChEBI" id="CHEBI:43474"/>
        <dbReference type="ChEBI" id="CHEBI:456216"/>
        <dbReference type="EC" id="7.3.2.5"/>
    </reaction>
</comment>
<comment type="subunit">
    <text evidence="1">The complex is composed of two ATP-binding proteins (ModC), two transmembrane proteins (ModB) and a solute-binding protein (ModA).</text>
</comment>
<comment type="subcellular location">
    <subcellularLocation>
        <location evidence="1">Cell inner membrane</location>
        <topology evidence="1">Peripheral membrane protein</topology>
    </subcellularLocation>
</comment>
<comment type="similarity">
    <text evidence="1">Belongs to the ABC transporter superfamily. Molybdate importer (TC 3.A.1.8) family.</text>
</comment>
<organism>
    <name type="scientific">Bradyrhizobium diazoefficiens (strain JCM 10833 / BCRC 13528 / IAM 13628 / NBRC 14792 / USDA 110)</name>
    <dbReference type="NCBI Taxonomy" id="224911"/>
    <lineage>
        <taxon>Bacteria</taxon>
        <taxon>Pseudomonadati</taxon>
        <taxon>Pseudomonadota</taxon>
        <taxon>Alphaproteobacteria</taxon>
        <taxon>Hyphomicrobiales</taxon>
        <taxon>Nitrobacteraceae</taxon>
        <taxon>Bradyrhizobium</taxon>
    </lineage>
</organism>
<gene>
    <name evidence="1" type="primary">modC2</name>
    <name type="ordered locus">blr6953</name>
</gene>
<proteinExistence type="inferred from homology"/>
<sequence>MTADGRGRIDAAFRGRLGRFVLDASLSVPATGVTAIFGPSGCGKTTIARCIAGLQRLSDGFCAIDGEIWQDGMAFRPAHRRPVGYVFQEPSLFPHLSVRGNLLYGAPKAAATSIGFDEVVELLGLTALLGRSPHRLSGGERQRVAIGRALLSQPRLLLMDEPLAALDRTTKNEILPFLERLHERLSLPVLYISHDMAEIERFADYLVLMERGRVVGAGPLHILQSDPALPLAYSRDAAVSIDGLVEAYDERYGLLTLAVNGGLLHVPSHRIAVGARQRLRIAASDVSIVRARPSESSILNILPARIVTQSPPGAGEVTIVLGLDSDGSGAPILSRISSRSRDLLGLSDGMAVFAQVKGVSLVRASGCAIGNMGPTAPGQLDHCSTQDTGVRSEAGTTAMPIDFAEIDPNRVAAILYRPQDDLDTLLADFAQDLVRAGERIGGIVQRNIKDGSGCQVGMQAIDLMTGREISICQPLGSGAMACKLDAAGLADASVAVASAIAQDVDLIVINKFSKQEAAGRGLRDELAGAIAAGIPVLTAVPEKCFEAWISFTGGIGTTLLCERQVIEAWWRDTSSRMKRMREDHDAVVAQCIEISGALPLVQRVVARQLVVTHDLPLDPERAEAEVVVRGVVERTNVEVLDGAADEADEAPDAGFPVGPERIERLPDIGPVPRRHEALQVEREVLSPDACLQRSAGERVDVFKEGKTKVGTVLVDRGDAELVEGPIVLELHEGAPVLVEMNVGVDLQTLYEIAVRGRVAGAERRCAIGLEAFAQRRPQRDVAFRIGGPKRDVFEPVKRFGTQPGIGKDRPVLCPAVRLDRRPLGDRSVLGPREPDAGAKGRKRQNDPEVAHIAPCQHRRTSPHLASARDALFGPREWISATYPPGNMTNAADRLLDV</sequence>
<keyword id="KW-0067">ATP-binding</keyword>
<keyword id="KW-0997">Cell inner membrane</keyword>
<keyword id="KW-1003">Cell membrane</keyword>
<keyword id="KW-0472">Membrane</keyword>
<keyword id="KW-0500">Molybdenum</keyword>
<keyword id="KW-0547">Nucleotide-binding</keyword>
<keyword id="KW-1185">Reference proteome</keyword>
<keyword id="KW-1278">Translocase</keyword>
<keyword id="KW-0813">Transport</keyword>
<evidence type="ECO:0000255" key="1">
    <source>
        <dbReference type="HAMAP-Rule" id="MF_01705"/>
    </source>
</evidence>
<evidence type="ECO:0000255" key="2">
    <source>
        <dbReference type="PROSITE-ProRule" id="PRU01213"/>
    </source>
</evidence>
<evidence type="ECO:0000256" key="3">
    <source>
        <dbReference type="SAM" id="MobiDB-lite"/>
    </source>
</evidence>
<protein>
    <recommendedName>
        <fullName evidence="1">Molybdenum import ATP-binding protein ModC 2</fullName>
        <ecNumber evidence="1">7.3.2.5</ecNumber>
    </recommendedName>
</protein>
<accession>Q89EW7</accession>
<reference key="1">
    <citation type="journal article" date="2002" name="DNA Res.">
        <title>Complete genomic sequence of nitrogen-fixing symbiotic bacterium Bradyrhizobium japonicum USDA110.</title>
        <authorList>
            <person name="Kaneko T."/>
            <person name="Nakamura Y."/>
            <person name="Sato S."/>
            <person name="Minamisawa K."/>
            <person name="Uchiumi T."/>
            <person name="Sasamoto S."/>
            <person name="Watanabe A."/>
            <person name="Idesawa K."/>
            <person name="Iriguchi M."/>
            <person name="Kawashima K."/>
            <person name="Kohara M."/>
            <person name="Matsumoto M."/>
            <person name="Shimpo S."/>
            <person name="Tsuruoka H."/>
            <person name="Wada T."/>
            <person name="Yamada M."/>
            <person name="Tabata S."/>
        </authorList>
    </citation>
    <scope>NUCLEOTIDE SEQUENCE [LARGE SCALE GENOMIC DNA]</scope>
    <source>
        <strain>JCM 10833 / BCRC 13528 / IAM 13628 / NBRC 14792 / USDA 110</strain>
    </source>
</reference>
<name>MODC2_BRADU</name>
<dbReference type="EC" id="7.3.2.5" evidence="1"/>
<dbReference type="EMBL" id="BA000040">
    <property type="protein sequence ID" value="BAC52218.1"/>
    <property type="molecule type" value="Genomic_DNA"/>
</dbReference>
<dbReference type="RefSeq" id="NP_773593.1">
    <property type="nucleotide sequence ID" value="NC_004463.1"/>
</dbReference>
<dbReference type="SMR" id="Q89EW7"/>
<dbReference type="EnsemblBacteria" id="BAC52218">
    <property type="protein sequence ID" value="BAC52218"/>
    <property type="gene ID" value="BAC52218"/>
</dbReference>
<dbReference type="KEGG" id="bja:blr6953"/>
<dbReference type="PATRIC" id="fig|224911.5.peg.7124"/>
<dbReference type="eggNOG" id="COG1618">
    <property type="taxonomic scope" value="Bacteria"/>
</dbReference>
<dbReference type="eggNOG" id="COG4148">
    <property type="taxonomic scope" value="Bacteria"/>
</dbReference>
<dbReference type="HOGENOM" id="CLU_322557_0_0_5"/>
<dbReference type="InParanoid" id="Q89EW7"/>
<dbReference type="OrthoDB" id="9802264at2"/>
<dbReference type="Proteomes" id="UP000002526">
    <property type="component" value="Chromosome"/>
</dbReference>
<dbReference type="GO" id="GO:0005886">
    <property type="term" value="C:plasma membrane"/>
    <property type="evidence" value="ECO:0007669"/>
    <property type="project" value="UniProtKB-SubCell"/>
</dbReference>
<dbReference type="GO" id="GO:0015412">
    <property type="term" value="F:ABC-type molybdate transporter activity"/>
    <property type="evidence" value="ECO:0007669"/>
    <property type="project" value="UniProtKB-EC"/>
</dbReference>
<dbReference type="GO" id="GO:0005524">
    <property type="term" value="F:ATP binding"/>
    <property type="evidence" value="ECO:0007669"/>
    <property type="project" value="UniProtKB-KW"/>
</dbReference>
<dbReference type="GO" id="GO:0016887">
    <property type="term" value="F:ATP hydrolysis activity"/>
    <property type="evidence" value="ECO:0007669"/>
    <property type="project" value="InterPro"/>
</dbReference>
<dbReference type="Gene3D" id="2.40.50.100">
    <property type="match status" value="1"/>
</dbReference>
<dbReference type="Gene3D" id="3.40.50.300">
    <property type="entry name" value="P-loop containing nucleotide triphosphate hydrolases"/>
    <property type="match status" value="1"/>
</dbReference>
<dbReference type="InterPro" id="IPR003593">
    <property type="entry name" value="AAA+_ATPase"/>
</dbReference>
<dbReference type="InterPro" id="IPR003439">
    <property type="entry name" value="ABC_transporter-like_ATP-bd"/>
</dbReference>
<dbReference type="InterPro" id="IPR017871">
    <property type="entry name" value="ABC_transporter-like_CS"/>
</dbReference>
<dbReference type="InterPro" id="IPR018912">
    <property type="entry name" value="DUF2478"/>
</dbReference>
<dbReference type="InterPro" id="IPR008995">
    <property type="entry name" value="Mo/tungstate-bd_C_term_dom"/>
</dbReference>
<dbReference type="InterPro" id="IPR011868">
    <property type="entry name" value="ModC_ABC_ATP-bd"/>
</dbReference>
<dbReference type="InterPro" id="IPR050334">
    <property type="entry name" value="Molybdenum_import_ModC"/>
</dbReference>
<dbReference type="InterPro" id="IPR004606">
    <property type="entry name" value="Mop_domain"/>
</dbReference>
<dbReference type="InterPro" id="IPR027417">
    <property type="entry name" value="P-loop_NTPase"/>
</dbReference>
<dbReference type="InterPro" id="IPR005116">
    <property type="entry name" value="Transp-assoc_OB_typ1"/>
</dbReference>
<dbReference type="NCBIfam" id="TIGR02142">
    <property type="entry name" value="modC_ABC"/>
    <property type="match status" value="1"/>
</dbReference>
<dbReference type="PANTHER" id="PTHR43514">
    <property type="entry name" value="ABC TRANSPORTER I FAMILY MEMBER 10"/>
    <property type="match status" value="1"/>
</dbReference>
<dbReference type="PANTHER" id="PTHR43514:SF10">
    <property type="entry name" value="MOLYBDENUM IMPORT ATP-BINDING PROTEIN MODC 2"/>
    <property type="match status" value="1"/>
</dbReference>
<dbReference type="Pfam" id="PF00005">
    <property type="entry name" value="ABC_tran"/>
    <property type="match status" value="1"/>
</dbReference>
<dbReference type="Pfam" id="PF10649">
    <property type="entry name" value="DUF2478"/>
    <property type="match status" value="1"/>
</dbReference>
<dbReference type="Pfam" id="PF03459">
    <property type="entry name" value="TOBE"/>
    <property type="match status" value="1"/>
</dbReference>
<dbReference type="SMART" id="SM00382">
    <property type="entry name" value="AAA"/>
    <property type="match status" value="1"/>
</dbReference>
<dbReference type="SUPFAM" id="SSF50331">
    <property type="entry name" value="MOP-like"/>
    <property type="match status" value="1"/>
</dbReference>
<dbReference type="SUPFAM" id="SSF52540">
    <property type="entry name" value="P-loop containing nucleoside triphosphate hydrolases"/>
    <property type="match status" value="1"/>
</dbReference>
<dbReference type="PROSITE" id="PS00211">
    <property type="entry name" value="ABC_TRANSPORTER_1"/>
    <property type="match status" value="1"/>
</dbReference>
<dbReference type="PROSITE" id="PS50893">
    <property type="entry name" value="ABC_TRANSPORTER_2"/>
    <property type="match status" value="1"/>
</dbReference>
<dbReference type="PROSITE" id="PS51241">
    <property type="entry name" value="MODC"/>
    <property type="match status" value="1"/>
</dbReference>
<dbReference type="PROSITE" id="PS51866">
    <property type="entry name" value="MOP"/>
    <property type="match status" value="1"/>
</dbReference>